<proteinExistence type="inferred from homology"/>
<dbReference type="EC" id="2.7.1.71" evidence="1"/>
<dbReference type="EMBL" id="CP000733">
    <property type="protein sequence ID" value="ABS76910.1"/>
    <property type="molecule type" value="Genomic_DNA"/>
</dbReference>
<dbReference type="RefSeq" id="WP_011996421.1">
    <property type="nucleotide sequence ID" value="NC_009727.1"/>
</dbReference>
<dbReference type="SMR" id="A9KBB0"/>
<dbReference type="KEGG" id="cbd:CBUD_0124"/>
<dbReference type="HOGENOM" id="CLU_057607_2_2_6"/>
<dbReference type="UniPathway" id="UPA00053">
    <property type="reaction ID" value="UER00088"/>
</dbReference>
<dbReference type="Proteomes" id="UP000008555">
    <property type="component" value="Chromosome"/>
</dbReference>
<dbReference type="GO" id="GO:0005829">
    <property type="term" value="C:cytosol"/>
    <property type="evidence" value="ECO:0007669"/>
    <property type="project" value="TreeGrafter"/>
</dbReference>
<dbReference type="GO" id="GO:0005524">
    <property type="term" value="F:ATP binding"/>
    <property type="evidence" value="ECO:0007669"/>
    <property type="project" value="UniProtKB-UniRule"/>
</dbReference>
<dbReference type="GO" id="GO:0000287">
    <property type="term" value="F:magnesium ion binding"/>
    <property type="evidence" value="ECO:0007669"/>
    <property type="project" value="UniProtKB-UniRule"/>
</dbReference>
<dbReference type="GO" id="GO:0004765">
    <property type="term" value="F:shikimate kinase activity"/>
    <property type="evidence" value="ECO:0007669"/>
    <property type="project" value="UniProtKB-UniRule"/>
</dbReference>
<dbReference type="GO" id="GO:0008652">
    <property type="term" value="P:amino acid biosynthetic process"/>
    <property type="evidence" value="ECO:0007669"/>
    <property type="project" value="UniProtKB-KW"/>
</dbReference>
<dbReference type="GO" id="GO:0009073">
    <property type="term" value="P:aromatic amino acid family biosynthetic process"/>
    <property type="evidence" value="ECO:0007669"/>
    <property type="project" value="UniProtKB-KW"/>
</dbReference>
<dbReference type="GO" id="GO:0009423">
    <property type="term" value="P:chorismate biosynthetic process"/>
    <property type="evidence" value="ECO:0007669"/>
    <property type="project" value="UniProtKB-UniRule"/>
</dbReference>
<dbReference type="CDD" id="cd00464">
    <property type="entry name" value="SK"/>
    <property type="match status" value="1"/>
</dbReference>
<dbReference type="FunFam" id="3.40.50.300:FF:003599">
    <property type="entry name" value="Shikimate kinase"/>
    <property type="match status" value="1"/>
</dbReference>
<dbReference type="Gene3D" id="3.40.50.300">
    <property type="entry name" value="P-loop containing nucleotide triphosphate hydrolases"/>
    <property type="match status" value="1"/>
</dbReference>
<dbReference type="HAMAP" id="MF_00109">
    <property type="entry name" value="Shikimate_kinase"/>
    <property type="match status" value="1"/>
</dbReference>
<dbReference type="InterPro" id="IPR027417">
    <property type="entry name" value="P-loop_NTPase"/>
</dbReference>
<dbReference type="InterPro" id="IPR031322">
    <property type="entry name" value="Shikimate/glucono_kinase"/>
</dbReference>
<dbReference type="InterPro" id="IPR000623">
    <property type="entry name" value="Shikimate_kinase/TSH1"/>
</dbReference>
<dbReference type="InterPro" id="IPR023000">
    <property type="entry name" value="Shikimate_kinase_CS"/>
</dbReference>
<dbReference type="PANTHER" id="PTHR21087">
    <property type="entry name" value="SHIKIMATE KINASE"/>
    <property type="match status" value="1"/>
</dbReference>
<dbReference type="PANTHER" id="PTHR21087:SF16">
    <property type="entry name" value="SHIKIMATE KINASE 1, CHLOROPLASTIC"/>
    <property type="match status" value="1"/>
</dbReference>
<dbReference type="Pfam" id="PF01202">
    <property type="entry name" value="SKI"/>
    <property type="match status" value="1"/>
</dbReference>
<dbReference type="PRINTS" id="PR01100">
    <property type="entry name" value="SHIKIMTKNASE"/>
</dbReference>
<dbReference type="SUPFAM" id="SSF52540">
    <property type="entry name" value="P-loop containing nucleoside triphosphate hydrolases"/>
    <property type="match status" value="1"/>
</dbReference>
<dbReference type="PROSITE" id="PS01128">
    <property type="entry name" value="SHIKIMATE_KINASE"/>
    <property type="match status" value="1"/>
</dbReference>
<evidence type="ECO:0000255" key="1">
    <source>
        <dbReference type="HAMAP-Rule" id="MF_00109"/>
    </source>
</evidence>
<gene>
    <name evidence="1" type="primary">aroK</name>
    <name type="ordered locus">CBUD_0124</name>
</gene>
<reference key="1">
    <citation type="journal article" date="2009" name="Infect. Immun.">
        <title>Comparative genomics reveal extensive transposon-mediated genomic plasticity and diversity among potential effector proteins within the genus Coxiella.</title>
        <authorList>
            <person name="Beare P.A."/>
            <person name="Unsworth N."/>
            <person name="Andoh M."/>
            <person name="Voth D.E."/>
            <person name="Omsland A."/>
            <person name="Gilk S.D."/>
            <person name="Williams K.P."/>
            <person name="Sobral B.W."/>
            <person name="Kupko J.J. III"/>
            <person name="Porcella S.F."/>
            <person name="Samuel J.E."/>
            <person name="Heinzen R.A."/>
        </authorList>
    </citation>
    <scope>NUCLEOTIDE SEQUENCE [LARGE SCALE GENOMIC DNA]</scope>
    <source>
        <strain>Dugway 5J108-111</strain>
    </source>
</reference>
<organism>
    <name type="scientific">Coxiella burnetii (strain Dugway 5J108-111)</name>
    <dbReference type="NCBI Taxonomy" id="434922"/>
    <lineage>
        <taxon>Bacteria</taxon>
        <taxon>Pseudomonadati</taxon>
        <taxon>Pseudomonadota</taxon>
        <taxon>Gammaproteobacteria</taxon>
        <taxon>Legionellales</taxon>
        <taxon>Coxiellaceae</taxon>
        <taxon>Coxiella</taxon>
    </lineage>
</organism>
<accession>A9KBB0</accession>
<name>AROK_COXBN</name>
<protein>
    <recommendedName>
        <fullName evidence="1">Shikimate kinase</fullName>
        <shortName evidence="1">SK</shortName>
        <ecNumber evidence="1">2.7.1.71</ecNumber>
    </recommendedName>
</protein>
<feature type="chain" id="PRO_1000075947" description="Shikimate kinase">
    <location>
        <begin position="1"/>
        <end position="179"/>
    </location>
</feature>
<feature type="binding site" evidence="1">
    <location>
        <begin position="15"/>
        <end position="20"/>
    </location>
    <ligand>
        <name>ATP</name>
        <dbReference type="ChEBI" id="CHEBI:30616"/>
    </ligand>
</feature>
<feature type="binding site" evidence="1">
    <location>
        <position position="19"/>
    </location>
    <ligand>
        <name>Mg(2+)</name>
        <dbReference type="ChEBI" id="CHEBI:18420"/>
    </ligand>
</feature>
<feature type="binding site" evidence="1">
    <location>
        <position position="37"/>
    </location>
    <ligand>
        <name>substrate</name>
    </ligand>
</feature>
<feature type="binding site" evidence="1">
    <location>
        <position position="61"/>
    </location>
    <ligand>
        <name>substrate</name>
    </ligand>
</feature>
<feature type="binding site" evidence="1">
    <location>
        <position position="83"/>
    </location>
    <ligand>
        <name>substrate</name>
    </ligand>
</feature>
<feature type="binding site" evidence="1">
    <location>
        <position position="122"/>
    </location>
    <ligand>
        <name>ATP</name>
        <dbReference type="ChEBI" id="CHEBI:30616"/>
    </ligand>
</feature>
<feature type="binding site" evidence="1">
    <location>
        <position position="142"/>
    </location>
    <ligand>
        <name>substrate</name>
    </ligand>
</feature>
<sequence length="179" mass="20319">MKKNLTNIYLIGPMGAGKTSVGSQLAKLTKRILYDSDKEIEKRTGADIAWIFEMEGEAGFRRREREMIEALCKLDNIILATGGGVVLDEKNRQQISETGVVIYLTASIDTQLKRIGQKGEMRRPLFIKNNSKEKLQQLNEIRKPLYQAMADLVYPTDDLNPRQLATQILVDIKQTYSDL</sequence>
<comment type="function">
    <text evidence="1">Catalyzes the specific phosphorylation of the 3-hydroxyl group of shikimic acid using ATP as a cosubstrate.</text>
</comment>
<comment type="catalytic activity">
    <reaction evidence="1">
        <text>shikimate + ATP = 3-phosphoshikimate + ADP + H(+)</text>
        <dbReference type="Rhea" id="RHEA:13121"/>
        <dbReference type="ChEBI" id="CHEBI:15378"/>
        <dbReference type="ChEBI" id="CHEBI:30616"/>
        <dbReference type="ChEBI" id="CHEBI:36208"/>
        <dbReference type="ChEBI" id="CHEBI:145989"/>
        <dbReference type="ChEBI" id="CHEBI:456216"/>
        <dbReference type="EC" id="2.7.1.71"/>
    </reaction>
</comment>
<comment type="cofactor">
    <cofactor evidence="1">
        <name>Mg(2+)</name>
        <dbReference type="ChEBI" id="CHEBI:18420"/>
    </cofactor>
    <text evidence="1">Binds 1 Mg(2+) ion per subunit.</text>
</comment>
<comment type="pathway">
    <text evidence="1">Metabolic intermediate biosynthesis; chorismate biosynthesis; chorismate from D-erythrose 4-phosphate and phosphoenolpyruvate: step 5/7.</text>
</comment>
<comment type="subunit">
    <text evidence="1">Monomer.</text>
</comment>
<comment type="subcellular location">
    <subcellularLocation>
        <location evidence="1">Cytoplasm</location>
    </subcellularLocation>
</comment>
<comment type="similarity">
    <text evidence="1">Belongs to the shikimate kinase family.</text>
</comment>
<keyword id="KW-0028">Amino-acid biosynthesis</keyword>
<keyword id="KW-0057">Aromatic amino acid biosynthesis</keyword>
<keyword id="KW-0067">ATP-binding</keyword>
<keyword id="KW-0963">Cytoplasm</keyword>
<keyword id="KW-0418">Kinase</keyword>
<keyword id="KW-0460">Magnesium</keyword>
<keyword id="KW-0479">Metal-binding</keyword>
<keyword id="KW-0547">Nucleotide-binding</keyword>
<keyword id="KW-0808">Transferase</keyword>